<name>PEPO_LACLS</name>
<gene>
    <name type="primary">pepO</name>
    <name type="ordered locus">LACR_D16</name>
</gene>
<evidence type="ECO:0000250" key="1"/>
<evidence type="ECO:0000255" key="2">
    <source>
        <dbReference type="PROSITE-ProRule" id="PRU01233"/>
    </source>
</evidence>
<evidence type="ECO:0000255" key="3">
    <source>
        <dbReference type="PROSITE-ProRule" id="PRU10095"/>
    </source>
</evidence>
<evidence type="ECO:0000269" key="4">
    <source>
    </source>
</evidence>
<evidence type="ECO:0000305" key="5"/>
<proteinExistence type="evidence at protein level"/>
<sequence>MTRIQDDLFATVNAEWLENAEIPADKPRISAFDELVLKNEKNLAKDLADLSQNLPTDNPELLEAIKFYNKAGDWQAREKADFSAVKNELAKVETLNTFEDFKNNLTQLVFHSQAPLPFSFSVEPDMKDAIHYSLGFSGPGLILPDTTYYNDEHPRKKELLDFWAKNTSEILKTFDVENAEEIAKSALKFDALLVPSANTSEEWAKYAELYHPISTDSFVSKVKNLDLKSLIKDLVKTEPDKVIVYEDRFYESFDSLINEENWSLIKAWMLTKIARGATSFFNEDLRILGGAYGRFLSNVQEARSQEKHQLDLTESYFSQVIGLFYGKKYFGEAGKADVKRMVTAMIKVYQARLSKNEWLSQETAEKAIEKLDAITPFIGFPDKLPEIYSRLKTTSGSLYEDALKFDEILTARTFEKFSEDVDKTSWHMPAHMVNAYYSPDSNTIVFPAAILQAPFYSLEQSSSQNYGGIGTVIAHEISHAFDNNGAQFDKEGNLNKWWLDEDYEAFEEKQKEMIALFDGVETEAGPANGKLIVSENIADQGGITAALTAAKDEKDVDLKAFFSQWAKIWRMKASKEFQQMLLSMDFHAPAKLRANIPPTNLEEFYDTFDVKETDKMYRAPENRLKIW</sequence>
<geneLocation type="plasmid">
    <name>pLACR4</name>
</geneLocation>
<geneLocation type="plasmid">
    <name>pSK11L</name>
</geneLocation>
<dbReference type="EC" id="3.4.24.-"/>
<dbReference type="EMBL" id="CP000429">
    <property type="protein sequence ID" value="ABJ74112.1"/>
    <property type="molecule type" value="Genomic_DNA"/>
</dbReference>
<dbReference type="EMBL" id="U09553">
    <property type="protein sequence ID" value="AAB00538.1"/>
    <property type="molecule type" value="Unassigned_DNA"/>
</dbReference>
<dbReference type="RefSeq" id="WP_011669109.1">
    <property type="nucleotide sequence ID" value="NC_008506.1"/>
</dbReference>
<dbReference type="SMR" id="Q02VB0"/>
<dbReference type="MEROPS" id="M13.004"/>
<dbReference type="KEGG" id="llc:LACR_D16"/>
<dbReference type="HOGENOM" id="CLU_006187_7_2_9"/>
<dbReference type="Proteomes" id="UP000000240">
    <property type="component" value="Plasmid pLACR4"/>
</dbReference>
<dbReference type="GO" id="GO:0005737">
    <property type="term" value="C:cytoplasm"/>
    <property type="evidence" value="ECO:0007669"/>
    <property type="project" value="UniProtKB-SubCell"/>
</dbReference>
<dbReference type="GO" id="GO:0005886">
    <property type="term" value="C:plasma membrane"/>
    <property type="evidence" value="ECO:0007669"/>
    <property type="project" value="TreeGrafter"/>
</dbReference>
<dbReference type="GO" id="GO:0046872">
    <property type="term" value="F:metal ion binding"/>
    <property type="evidence" value="ECO:0007669"/>
    <property type="project" value="UniProtKB-KW"/>
</dbReference>
<dbReference type="GO" id="GO:0004222">
    <property type="term" value="F:metalloendopeptidase activity"/>
    <property type="evidence" value="ECO:0007669"/>
    <property type="project" value="InterPro"/>
</dbReference>
<dbReference type="GO" id="GO:0016485">
    <property type="term" value="P:protein processing"/>
    <property type="evidence" value="ECO:0007669"/>
    <property type="project" value="TreeGrafter"/>
</dbReference>
<dbReference type="CDD" id="cd08662">
    <property type="entry name" value="M13"/>
    <property type="match status" value="1"/>
</dbReference>
<dbReference type="Gene3D" id="3.40.390.10">
    <property type="entry name" value="Collagenase (Catalytic Domain)"/>
    <property type="match status" value="1"/>
</dbReference>
<dbReference type="Gene3D" id="1.10.1380.10">
    <property type="entry name" value="Neutral endopeptidase , domain2"/>
    <property type="match status" value="1"/>
</dbReference>
<dbReference type="InterPro" id="IPR024079">
    <property type="entry name" value="MetalloPept_cat_dom_sf"/>
</dbReference>
<dbReference type="InterPro" id="IPR000718">
    <property type="entry name" value="Peptidase_M13"/>
</dbReference>
<dbReference type="InterPro" id="IPR018497">
    <property type="entry name" value="Peptidase_M13_C"/>
</dbReference>
<dbReference type="InterPro" id="IPR042089">
    <property type="entry name" value="Peptidase_M13_dom_2"/>
</dbReference>
<dbReference type="InterPro" id="IPR008753">
    <property type="entry name" value="Peptidase_M13_N"/>
</dbReference>
<dbReference type="PANTHER" id="PTHR11733:SF167">
    <property type="entry name" value="FI17812P1-RELATED"/>
    <property type="match status" value="1"/>
</dbReference>
<dbReference type="PANTHER" id="PTHR11733">
    <property type="entry name" value="ZINC METALLOPROTEASE FAMILY M13 NEPRILYSIN-RELATED"/>
    <property type="match status" value="1"/>
</dbReference>
<dbReference type="Pfam" id="PF01431">
    <property type="entry name" value="Peptidase_M13"/>
    <property type="match status" value="1"/>
</dbReference>
<dbReference type="Pfam" id="PF05649">
    <property type="entry name" value="Peptidase_M13_N"/>
    <property type="match status" value="1"/>
</dbReference>
<dbReference type="PRINTS" id="PR00786">
    <property type="entry name" value="NEPRILYSIN"/>
</dbReference>
<dbReference type="SUPFAM" id="SSF55486">
    <property type="entry name" value="Metalloproteases ('zincins'), catalytic domain"/>
    <property type="match status" value="1"/>
</dbReference>
<dbReference type="PROSITE" id="PS51885">
    <property type="entry name" value="NEPRILYSIN"/>
    <property type="match status" value="1"/>
</dbReference>
<dbReference type="PROSITE" id="PS00142">
    <property type="entry name" value="ZINC_PROTEASE"/>
    <property type="match status" value="1"/>
</dbReference>
<keyword id="KW-0963">Cytoplasm</keyword>
<keyword id="KW-0903">Direct protein sequencing</keyword>
<keyword id="KW-0378">Hydrolase</keyword>
<keyword id="KW-0479">Metal-binding</keyword>
<keyword id="KW-0482">Metalloprotease</keyword>
<keyword id="KW-0614">Plasmid</keyword>
<keyword id="KW-0645">Protease</keyword>
<keyword id="KW-0862">Zinc</keyword>
<accession>Q02VB0</accession>
<accession>Q09145</accession>
<feature type="initiator methionine" description="Removed" evidence="4">
    <location>
        <position position="1"/>
    </location>
</feature>
<feature type="chain" id="PRO_0000272023" description="Neutral endopeptidase">
    <location>
        <begin position="2"/>
        <end position="627"/>
    </location>
</feature>
<feature type="domain" description="Peptidase M13" evidence="2">
    <location>
        <begin position="1"/>
        <end position="627"/>
    </location>
</feature>
<feature type="active site" evidence="2 3">
    <location>
        <position position="476"/>
    </location>
</feature>
<feature type="active site" description="Proton donor" evidence="2">
    <location>
        <position position="539"/>
    </location>
</feature>
<feature type="binding site" evidence="2 3">
    <location>
        <position position="475"/>
    </location>
    <ligand>
        <name>Zn(2+)</name>
        <dbReference type="ChEBI" id="CHEBI:29105"/>
        <note>catalytic</note>
    </ligand>
</feature>
<feature type="binding site" evidence="2 3">
    <location>
        <position position="479"/>
    </location>
    <ligand>
        <name>Zn(2+)</name>
        <dbReference type="ChEBI" id="CHEBI:29105"/>
        <note>catalytic</note>
    </ligand>
</feature>
<feature type="binding site" evidence="2">
    <location>
        <position position="535"/>
    </location>
    <ligand>
        <name>Zn(2+)</name>
        <dbReference type="ChEBI" id="CHEBI:29105"/>
        <note>catalytic</note>
    </ligand>
</feature>
<reference key="1">
    <citation type="journal article" date="2006" name="Proc. Natl. Acad. Sci. U.S.A.">
        <title>Comparative genomics of the lactic acid bacteria.</title>
        <authorList>
            <person name="Makarova K.S."/>
            <person name="Slesarev A."/>
            <person name="Wolf Y.I."/>
            <person name="Sorokin A."/>
            <person name="Mirkin B."/>
            <person name="Koonin E.V."/>
            <person name="Pavlov A."/>
            <person name="Pavlova N."/>
            <person name="Karamychev V."/>
            <person name="Polouchine N."/>
            <person name="Shakhova V."/>
            <person name="Grigoriev I."/>
            <person name="Lou Y."/>
            <person name="Rohksar D."/>
            <person name="Lucas S."/>
            <person name="Huang K."/>
            <person name="Goodstein D.M."/>
            <person name="Hawkins T."/>
            <person name="Plengvidhya V."/>
            <person name="Welker D."/>
            <person name="Hughes J."/>
            <person name="Goh Y."/>
            <person name="Benson A."/>
            <person name="Baldwin K."/>
            <person name="Lee J.-H."/>
            <person name="Diaz-Muniz I."/>
            <person name="Dosti B."/>
            <person name="Smeianov V."/>
            <person name="Wechter W."/>
            <person name="Barabote R."/>
            <person name="Lorca G."/>
            <person name="Altermann E."/>
            <person name="Barrangou R."/>
            <person name="Ganesan B."/>
            <person name="Xie Y."/>
            <person name="Rawsthorne H."/>
            <person name="Tamir D."/>
            <person name="Parker C."/>
            <person name="Breidt F."/>
            <person name="Broadbent J.R."/>
            <person name="Hutkins R."/>
            <person name="O'Sullivan D."/>
            <person name="Steele J."/>
            <person name="Unlu G."/>
            <person name="Saier M.H. Jr."/>
            <person name="Klaenhammer T."/>
            <person name="Richardson P."/>
            <person name="Kozyavkin S."/>
            <person name="Weimer B.C."/>
            <person name="Mills D.A."/>
        </authorList>
    </citation>
    <scope>NUCLEOTIDE SEQUENCE [LARGE SCALE GENOMIC DNA]</scope>
    <source>
        <strain>SK11</strain>
        <plasmid>pLACR4</plasmid>
    </source>
</reference>
<reference key="2">
    <citation type="journal article" date="1995" name="Dev. Biol. Stand.">
        <title>Plasmid-mediated oligopeptide transport system in lactococci.</title>
        <authorList>
            <person name="Yu W."/>
            <person name="Gillies K."/>
            <person name="Kondo J.K."/>
            <person name="Broadbent J.R."/>
            <person name="McKay L.L."/>
        </authorList>
    </citation>
    <scope>NUCLEOTIDE SEQUENCE [GENOMIC DNA] OF 1-288</scope>
    <source>
        <plasmid>pSK11L</plasmid>
    </source>
</reference>
<reference key="3">
    <citation type="journal article" date="1994" name="Microbiology">
        <title>Purification and characterization of an endopeptidase from Lactococcus lactis subsp. cremoris SK11.</title>
        <authorList>
            <person name="Pritchard G.G."/>
            <person name="Freebairn A.D."/>
            <person name="Coolbear T."/>
        </authorList>
    </citation>
    <scope>PROTEIN SEQUENCE OF 2-22</scope>
    <scope>ACTIVITY REGULATION</scope>
    <scope>SUBCELLULAR LOCATION</scope>
    <scope>SUBUNIT</scope>
</reference>
<protein>
    <recommendedName>
        <fullName>Neutral endopeptidase</fullName>
        <ecNumber>3.4.24.-</ecNumber>
    </recommendedName>
    <alternativeName>
        <fullName>Endopeptidase O</fullName>
    </alternativeName>
</protein>
<comment type="function">
    <text>Endopeptidase with broad substrate specificity for several oligopeptides.</text>
</comment>
<comment type="cofactor">
    <cofactor evidence="1">
        <name>Zn(2+)</name>
        <dbReference type="ChEBI" id="CHEBI:29105"/>
    </cofactor>
    <text evidence="1">Binds 1 zinc ion per subunit.</text>
</comment>
<comment type="activity regulation">
    <text evidence="4">Strongly inhibited by 1,10-phenanthroline and phosphoramidon but relatively insensitive to EDTA. Not significantly inhibited by p-chloromercuribenzoate nor by phenylmethylsulfonyl fluoride.</text>
</comment>
<comment type="biophysicochemical properties">
    <phDependence>
        <text>Optimum pH is 6.0-6.5.</text>
    </phDependence>
    <temperatureDependence>
        <text>Optimum temperature is 30-38 degrees Celsius.</text>
    </temperatureDependence>
</comment>
<comment type="subunit">
    <text evidence="4">Monomer.</text>
</comment>
<comment type="subcellular location">
    <subcellularLocation>
        <location evidence="4">Cytoplasm</location>
    </subcellularLocation>
</comment>
<comment type="similarity">
    <text evidence="2 5">Belongs to the peptidase M13 family.</text>
</comment>
<organism>
    <name type="scientific">Lactococcus lactis subsp. cremoris (strain SK11)</name>
    <dbReference type="NCBI Taxonomy" id="272622"/>
    <lineage>
        <taxon>Bacteria</taxon>
        <taxon>Bacillati</taxon>
        <taxon>Bacillota</taxon>
        <taxon>Bacilli</taxon>
        <taxon>Lactobacillales</taxon>
        <taxon>Streptococcaceae</taxon>
        <taxon>Lactococcus</taxon>
        <taxon>Lactococcus cremoris subsp. cremoris</taxon>
    </lineage>
</organism>